<accession>Q63191</accession>
<keyword id="KW-0903">Direct protein sequencing</keyword>
<keyword id="KW-1015">Disulfide bond</keyword>
<keyword id="KW-0325">Glycoprotein</keyword>
<keyword id="KW-0472">Membrane</keyword>
<keyword id="KW-0653">Protein transport</keyword>
<keyword id="KW-1185">Reference proteome</keyword>
<keyword id="KW-0677">Repeat</keyword>
<keyword id="KW-0732">Signal</keyword>
<keyword id="KW-0812">Transmembrane</keyword>
<keyword id="KW-1133">Transmembrane helix</keyword>
<keyword id="KW-0813">Transport</keyword>
<reference key="1">
    <citation type="journal article" date="1995" name="J. Biol. Chem.">
        <title>Molecular characterization of an apical early endosomal glycoprotein from developing rat intestinal epithelial cells.</title>
        <authorList>
            <person name="Speelman B.A."/>
            <person name="Allen K."/>
            <person name="Grounds T.L."/>
            <person name="Neutra M.R."/>
            <person name="Kirchhausen T."/>
            <person name="Wilson J.M."/>
        </authorList>
    </citation>
    <scope>NUCLEOTIDE SEQUENCE [MRNA]</scope>
    <scope>PROTEIN SEQUENCE OF 22-27; 108-121; 159-179; 210-227 AND 270-279</scope>
    <scope>TISSUE SPECIFICITY</scope>
    <source>
        <tissue>Intestinal epithelium</tissue>
    </source>
</reference>
<gene>
    <name type="primary">Mamdc4</name>
    <name type="synonym">Aegp</name>
</gene>
<proteinExistence type="evidence at protein level"/>
<sequence>MCLPSCLLSIWVLFMAAQSLGKTWVPDHCRSPTEATCNFVCDCGDCSDEAQCGFHGASTTPNTPFTCNFEQDPCGWQDISTSGYRWLRDRAGAGLDSSGPHSDHTRGTDLGWYMAVGTHSGKEPSTRTLRSPVMREAAPTCELRLWYHTDSRDVAELRLDLTHGMETLTLWQSSGPWGPWPGRELAVNTGRIQGDFKVTFSATRNATHRGAVALDDMEFWDCGLPIPQARCPLGHHHCQNKACVEPHQLCDGEDNCGDSSDEDPLICSHHMATDFETGLGPWTQLEGWTRNFSAGSMVSPAWPHRDHSRNSAYGFFLVSVAKPGTTAVLYSPEFQGSVSYNCSFTFYYYLHGSEANQFQLFVQAQGLNTTQPPVLLRSRHGELGTAWVRDRVNIQSAHPFRILLAGETGPGGFVGLDDLIMSNHCILVPGMSTLQSSLSGPVPLALYPQTSIKRTCDAGHLSCDELCVPPEQLCDFQQHCAEGEDEEKCGTTDFESASAGGWEDISIGKLQWQRAEAQESGKPARDTNRNAPGHFLSLRKAWGQLRSEARALTPTLGPSGPHCELHMTYYFHSHPQGFLALAVVENGFRELLWQAPSSSSGGWTLQKILLGARRWPFQLEFVSLVDLDGPGQQGAGVDNVTLRDCNPMVTTESDQEVSCNFERDSCSWHTGHLTDAHWHRVKSHGSQYDHTTGQGFFMFLDPMDPPARGQGALLLTRPQVPVVPKECLSFWYHLHGPQIGTLCLAMRREGEEDTLLWSRSGTHGNRWHQAWVTLHHQLQPSTKYQLLFEGLRDGYHGTMGLDDMAVRPGPCWAAKRCSFEDSDCGFSPGDWGLWTRQNNASGLGPWGPWIDHTTGTAQGHYMVVDTSPNLLPKGHVASLTSEEHPPLSRPACLSFWYHLSFHNPGTLRVFVEESTRRQELSISGHGGFAWRLGSVNVQAEQAWKVVFEAMASGVEHSYMALDDISLQDGPCAQPGSCDFESGLCGWSHLPWPGLGGYSWDWSSGATPSRYPRPSVDHTVGTEAGHFAFFETSVLGPGGQAAWLGSEPLPATAVSCLHFWYYMGFPAHFYKGELRVLLSSTQGQLAVWHRGGHLRDQWLQVQIEVSSSEEFQIVFEATLGGQPALGPIALDDVEYLAGQHCKQPTPSQGRVAAPVSVPVAVGGALLLFLLLLGLGGWHWLQKQHLPCQSTDAAASGFDNILFNADQVTLPESITSNP</sequence>
<comment type="function">
    <text>Probably involved in the sorting and selective transport of receptors and ligands across polarized epithelia.</text>
</comment>
<comment type="subcellular location">
    <subcellularLocation>
        <location evidence="5">Membrane</location>
        <topology evidence="5">Single-pass type I membrane protein</topology>
    </subcellularLocation>
</comment>
<comment type="tissue specificity">
    <text evidence="4">Apical endosomal tubules of developing rat intestinal epithelial cells.</text>
</comment>
<dbReference type="EMBL" id="L37380">
    <property type="protein sequence ID" value="AAA65200.1"/>
    <property type="molecule type" value="mRNA"/>
</dbReference>
<dbReference type="PIR" id="A55620">
    <property type="entry name" value="A55620"/>
</dbReference>
<dbReference type="RefSeq" id="NP_665711.1">
    <property type="nucleotide sequence ID" value="NM_145768.1"/>
</dbReference>
<dbReference type="SMR" id="Q63191"/>
<dbReference type="FunCoup" id="Q63191">
    <property type="interactions" value="122"/>
</dbReference>
<dbReference type="STRING" id="10116.ENSRNOP00000022390"/>
<dbReference type="GlyCosmos" id="Q63191">
    <property type="glycosylation" value="6 sites, No reported glycans"/>
</dbReference>
<dbReference type="GlyGen" id="Q63191">
    <property type="glycosylation" value="7 sites"/>
</dbReference>
<dbReference type="PhosphoSitePlus" id="Q63191"/>
<dbReference type="PaxDb" id="10116-ENSRNOP00000022390"/>
<dbReference type="GeneID" id="252882"/>
<dbReference type="KEGG" id="rno:252882"/>
<dbReference type="UCSC" id="RGD:708583">
    <property type="organism name" value="rat"/>
</dbReference>
<dbReference type="AGR" id="RGD:708583"/>
<dbReference type="CTD" id="158056"/>
<dbReference type="RGD" id="708583">
    <property type="gene designation" value="Mamdc4"/>
</dbReference>
<dbReference type="eggNOG" id="KOG3627">
    <property type="taxonomic scope" value="Eukaryota"/>
</dbReference>
<dbReference type="InParanoid" id="Q63191"/>
<dbReference type="PhylomeDB" id="Q63191"/>
<dbReference type="PRO" id="PR:Q63191"/>
<dbReference type="Proteomes" id="UP000002494">
    <property type="component" value="Unplaced"/>
</dbReference>
<dbReference type="GO" id="GO:0005768">
    <property type="term" value="C:endosome"/>
    <property type="evidence" value="ECO:0000314"/>
    <property type="project" value="RGD"/>
</dbReference>
<dbReference type="GO" id="GO:0016020">
    <property type="term" value="C:membrane"/>
    <property type="evidence" value="ECO:0007669"/>
    <property type="project" value="UniProtKB-SubCell"/>
</dbReference>
<dbReference type="GO" id="GO:0015031">
    <property type="term" value="P:protein transport"/>
    <property type="evidence" value="ECO:0007669"/>
    <property type="project" value="UniProtKB-KW"/>
</dbReference>
<dbReference type="CDD" id="cd00112">
    <property type="entry name" value="LDLa"/>
    <property type="match status" value="2"/>
</dbReference>
<dbReference type="CDD" id="cd06263">
    <property type="entry name" value="MAM"/>
    <property type="match status" value="5"/>
</dbReference>
<dbReference type="Gene3D" id="2.60.120.200">
    <property type="match status" value="6"/>
</dbReference>
<dbReference type="Gene3D" id="4.10.400.10">
    <property type="entry name" value="Low-density Lipoprotein Receptor"/>
    <property type="match status" value="2"/>
</dbReference>
<dbReference type="InterPro" id="IPR013320">
    <property type="entry name" value="ConA-like_dom_sf"/>
</dbReference>
<dbReference type="InterPro" id="IPR036055">
    <property type="entry name" value="LDL_receptor-like_sf"/>
</dbReference>
<dbReference type="InterPro" id="IPR023415">
    <property type="entry name" value="LDLR_class-A_CS"/>
</dbReference>
<dbReference type="InterPro" id="IPR002172">
    <property type="entry name" value="LDrepeatLR_classA_rpt"/>
</dbReference>
<dbReference type="InterPro" id="IPR000998">
    <property type="entry name" value="MAM_dom"/>
</dbReference>
<dbReference type="InterPro" id="IPR051560">
    <property type="entry name" value="MAM_domain-containing"/>
</dbReference>
<dbReference type="PANTHER" id="PTHR23282:SF129">
    <property type="entry name" value="APICAL ENDOSOMAL GLYCOPROTEIN"/>
    <property type="match status" value="1"/>
</dbReference>
<dbReference type="PANTHER" id="PTHR23282">
    <property type="entry name" value="APICAL ENDOSOMAL GLYCOPROTEIN PRECURSOR"/>
    <property type="match status" value="1"/>
</dbReference>
<dbReference type="Pfam" id="PF00057">
    <property type="entry name" value="Ldl_recept_a"/>
    <property type="match status" value="1"/>
</dbReference>
<dbReference type="Pfam" id="PF00629">
    <property type="entry name" value="MAM"/>
    <property type="match status" value="6"/>
</dbReference>
<dbReference type="PRINTS" id="PR00261">
    <property type="entry name" value="LDLRECEPTOR"/>
</dbReference>
<dbReference type="SMART" id="SM00192">
    <property type="entry name" value="LDLa"/>
    <property type="match status" value="2"/>
</dbReference>
<dbReference type="SMART" id="SM00137">
    <property type="entry name" value="MAM"/>
    <property type="match status" value="5"/>
</dbReference>
<dbReference type="SUPFAM" id="SSF49899">
    <property type="entry name" value="Concanavalin A-like lectins/glucanases"/>
    <property type="match status" value="6"/>
</dbReference>
<dbReference type="SUPFAM" id="SSF57424">
    <property type="entry name" value="LDL receptor-like module"/>
    <property type="match status" value="2"/>
</dbReference>
<dbReference type="PROSITE" id="PS01209">
    <property type="entry name" value="LDLRA_1"/>
    <property type="match status" value="2"/>
</dbReference>
<dbReference type="PROSITE" id="PS50068">
    <property type="entry name" value="LDLRA_2"/>
    <property type="match status" value="2"/>
</dbReference>
<dbReference type="PROSITE" id="PS50060">
    <property type="entry name" value="MAM_2"/>
    <property type="match status" value="6"/>
</dbReference>
<evidence type="ECO:0000255" key="1"/>
<evidence type="ECO:0000255" key="2">
    <source>
        <dbReference type="PROSITE-ProRule" id="PRU00124"/>
    </source>
</evidence>
<evidence type="ECO:0000255" key="3">
    <source>
        <dbReference type="PROSITE-ProRule" id="PRU00128"/>
    </source>
</evidence>
<evidence type="ECO:0000269" key="4">
    <source>
    </source>
</evidence>
<evidence type="ECO:0000305" key="5"/>
<organism>
    <name type="scientific">Rattus norvegicus</name>
    <name type="common">Rat</name>
    <dbReference type="NCBI Taxonomy" id="10116"/>
    <lineage>
        <taxon>Eukaryota</taxon>
        <taxon>Metazoa</taxon>
        <taxon>Chordata</taxon>
        <taxon>Craniata</taxon>
        <taxon>Vertebrata</taxon>
        <taxon>Euteleostomi</taxon>
        <taxon>Mammalia</taxon>
        <taxon>Eutheria</taxon>
        <taxon>Euarchontoglires</taxon>
        <taxon>Glires</taxon>
        <taxon>Rodentia</taxon>
        <taxon>Myomorpha</taxon>
        <taxon>Muroidea</taxon>
        <taxon>Muridae</taxon>
        <taxon>Murinae</taxon>
        <taxon>Rattus</taxon>
    </lineage>
</organism>
<name>AEGP_RAT</name>
<protein>
    <recommendedName>
        <fullName>Apical endosomal glycoprotein</fullName>
    </recommendedName>
    <alternativeName>
        <fullName>MAM domain-containing protein 4</fullName>
    </alternativeName>
</protein>
<feature type="signal peptide" evidence="4">
    <location>
        <begin position="1"/>
        <end position="21"/>
    </location>
</feature>
<feature type="chain" id="PRO_0000020634" description="Apical endosomal glycoprotein">
    <location>
        <begin position="22"/>
        <end position="1216"/>
    </location>
</feature>
<feature type="topological domain" description="Extracellular" evidence="1">
    <location>
        <begin position="22"/>
        <end position="1155"/>
    </location>
</feature>
<feature type="transmembrane region" description="Helical" evidence="1">
    <location>
        <begin position="1156"/>
        <end position="1176"/>
    </location>
</feature>
<feature type="topological domain" description="Cytoplasmic" evidence="1">
    <location>
        <begin position="1177"/>
        <end position="1216"/>
    </location>
</feature>
<feature type="domain" description="LDL-receptor class A 1; truncated" evidence="2">
    <location>
        <begin position="27"/>
        <end position="54"/>
    </location>
</feature>
<feature type="domain" description="MAM 1" evidence="3">
    <location>
        <begin position="62"/>
        <end position="224"/>
    </location>
</feature>
<feature type="domain" description="LDL-receptor class A 2" evidence="2">
    <location>
        <begin position="229"/>
        <end position="269"/>
    </location>
</feature>
<feature type="domain" description="MAM 2" evidence="3">
    <location>
        <begin position="268"/>
        <end position="427"/>
    </location>
</feature>
<feature type="domain" description="LDL-receptor class A 3" evidence="2">
    <location>
        <begin position="454"/>
        <end position="491"/>
    </location>
</feature>
<feature type="domain" description="MAM 3" evidence="3">
    <location>
        <begin position="492"/>
        <end position="647"/>
    </location>
</feature>
<feature type="domain" description="MAM 4" evidence="3">
    <location>
        <begin position="654"/>
        <end position="813"/>
    </location>
</feature>
<feature type="domain" description="MAM 5" evidence="3">
    <location>
        <begin position="812"/>
        <end position="973"/>
    </location>
</feature>
<feature type="domain" description="MAM 6" evidence="3">
    <location>
        <begin position="972"/>
        <end position="1142"/>
    </location>
</feature>
<feature type="glycosylation site" description="N-linked (GlcNAc...) asparagine" evidence="1">
    <location>
        <position position="205"/>
    </location>
</feature>
<feature type="glycosylation site" description="N-linked (GlcNAc...) asparagine" evidence="1">
    <location>
        <position position="291"/>
    </location>
</feature>
<feature type="glycosylation site" description="N-linked (GlcNAc...) asparagine" evidence="1">
    <location>
        <position position="341"/>
    </location>
</feature>
<feature type="glycosylation site" description="N-linked (GlcNAc...) asparagine" evidence="1">
    <location>
        <position position="368"/>
    </location>
</feature>
<feature type="glycosylation site" description="N-linked (GlcNAc...) asparagine" evidence="1">
    <location>
        <position position="639"/>
    </location>
</feature>
<feature type="glycosylation site" description="N-linked (GlcNAc...) asparagine" evidence="1">
    <location>
        <position position="839"/>
    </location>
</feature>
<feature type="disulfide bond" evidence="2">
    <location>
        <begin position="231"/>
        <end position="243"/>
    </location>
</feature>
<feature type="disulfide bond" evidence="2">
    <location>
        <begin position="238"/>
        <end position="256"/>
    </location>
</feature>
<feature type="disulfide bond" evidence="2">
    <location>
        <begin position="250"/>
        <end position="267"/>
    </location>
</feature>
<feature type="disulfide bond" evidence="2">
    <location>
        <begin position="456"/>
        <end position="467"/>
    </location>
</feature>
<feature type="disulfide bond" evidence="2">
    <location>
        <begin position="463"/>
        <end position="480"/>
    </location>
</feature>
<feature type="disulfide bond" evidence="2">
    <location>
        <begin position="474"/>
        <end position="489"/>
    </location>
</feature>